<evidence type="ECO:0000250" key="1">
    <source>
        <dbReference type="UniProtKB" id="P47008"/>
    </source>
</evidence>
<evidence type="ECO:0000255" key="2">
    <source>
        <dbReference type="PROSITE-ProRule" id="PRU00056"/>
    </source>
</evidence>
<evidence type="ECO:0000269" key="3">
    <source>
    </source>
</evidence>
<evidence type="ECO:0000305" key="4"/>
<evidence type="ECO:0007829" key="5">
    <source>
        <dbReference type="PDB" id="6W32"/>
    </source>
</evidence>
<feature type="chain" id="PRO_0000324991" description="Phosphatidylinositol transfer protein SFH5">
    <location>
        <begin position="1"/>
        <end position="294"/>
    </location>
</feature>
<feature type="domain" description="CRAL-TRIO" evidence="2">
    <location>
        <begin position="100"/>
        <end position="266"/>
    </location>
</feature>
<feature type="binding site" evidence="3">
    <location>
        <position position="128"/>
    </location>
    <ligand>
        <name>heme</name>
        <dbReference type="ChEBI" id="CHEBI:30413"/>
    </ligand>
</feature>
<feature type="binding site" evidence="3">
    <location>
        <position position="148"/>
    </location>
    <ligand>
        <name>heme</name>
        <dbReference type="ChEBI" id="CHEBI:30413"/>
    </ligand>
</feature>
<feature type="binding site" evidence="3">
    <location>
        <position position="173"/>
    </location>
    <ligand>
        <name>heme</name>
        <dbReference type="ChEBI" id="CHEBI:30413"/>
    </ligand>
</feature>
<feature type="binding site" description="proximal binding residue" evidence="3">
    <location>
        <position position="175"/>
    </location>
    <ligand>
        <name>heme</name>
        <dbReference type="ChEBI" id="CHEBI:30413"/>
    </ligand>
    <ligandPart>
        <name>Fe</name>
        <dbReference type="ChEBI" id="CHEBI:18248"/>
    </ligandPart>
</feature>
<feature type="binding site" evidence="3">
    <location>
        <position position="209"/>
    </location>
    <ligand>
        <name>heme</name>
        <dbReference type="ChEBI" id="CHEBI:30413"/>
    </ligand>
</feature>
<feature type="helix" evidence="5">
    <location>
        <begin position="6"/>
        <end position="26"/>
    </location>
</feature>
<feature type="helix" evidence="5">
    <location>
        <begin position="47"/>
        <end position="49"/>
    </location>
</feature>
<feature type="helix" evidence="5">
    <location>
        <begin position="54"/>
        <end position="67"/>
    </location>
</feature>
<feature type="turn" evidence="5">
    <location>
        <begin position="68"/>
        <end position="70"/>
    </location>
</feature>
<feature type="helix" evidence="5">
    <location>
        <begin position="72"/>
        <end position="88"/>
    </location>
</feature>
<feature type="helix" evidence="5">
    <location>
        <begin position="91"/>
        <end position="96"/>
    </location>
</feature>
<feature type="helix" evidence="5">
    <location>
        <begin position="102"/>
        <end position="105"/>
    </location>
</feature>
<feature type="strand" evidence="5">
    <location>
        <begin position="108"/>
        <end position="112"/>
    </location>
</feature>
<feature type="strand" evidence="5">
    <location>
        <begin position="121"/>
        <end position="126"/>
    </location>
</feature>
<feature type="helix" evidence="5">
    <location>
        <begin position="128"/>
        <end position="131"/>
    </location>
</feature>
<feature type="turn" evidence="5">
    <location>
        <begin position="135"/>
        <end position="139"/>
    </location>
</feature>
<feature type="helix" evidence="5">
    <location>
        <begin position="141"/>
        <end position="156"/>
    </location>
</feature>
<feature type="strand" evidence="5">
    <location>
        <begin position="164"/>
        <end position="174"/>
    </location>
</feature>
<feature type="helix" evidence="5">
    <location>
        <begin position="185"/>
        <end position="201"/>
    </location>
</feature>
<feature type="strand" evidence="5">
    <location>
        <begin position="206"/>
        <end position="213"/>
    </location>
</feature>
<feature type="helix" evidence="5">
    <location>
        <begin position="216"/>
        <end position="218"/>
    </location>
</feature>
<feature type="helix" evidence="5">
    <location>
        <begin position="219"/>
        <end position="226"/>
    </location>
</feature>
<feature type="helix" evidence="5">
    <location>
        <begin position="231"/>
        <end position="234"/>
    </location>
</feature>
<feature type="strand" evidence="5">
    <location>
        <begin position="237"/>
        <end position="242"/>
    </location>
</feature>
<feature type="helix" evidence="5">
    <location>
        <begin position="243"/>
        <end position="248"/>
    </location>
</feature>
<feature type="helix" evidence="5">
    <location>
        <begin position="255"/>
        <end position="258"/>
    </location>
</feature>
<feature type="helix" evidence="5">
    <location>
        <begin position="267"/>
        <end position="270"/>
    </location>
</feature>
<feature type="helix" evidence="5">
    <location>
        <begin position="279"/>
        <end position="288"/>
    </location>
</feature>
<gene>
    <name type="primary">SFH5</name>
    <name type="ORF">SCY_3146</name>
</gene>
<name>SFH5_YEAS7</name>
<accession>A6ZQI5</accession>
<protein>
    <recommendedName>
        <fullName>Phosphatidylinositol transfer protein SFH5</fullName>
        <shortName>PITP SFH5</shortName>
    </recommendedName>
    <alternativeName>
        <fullName>SEC14 homolog 5</fullName>
    </alternativeName>
</protein>
<proteinExistence type="evidence at protein level"/>
<organism>
    <name type="scientific">Saccharomyces cerevisiae (strain YJM789)</name>
    <name type="common">Baker's yeast</name>
    <dbReference type="NCBI Taxonomy" id="307796"/>
    <lineage>
        <taxon>Eukaryota</taxon>
        <taxon>Fungi</taxon>
        <taxon>Dikarya</taxon>
        <taxon>Ascomycota</taxon>
        <taxon>Saccharomycotina</taxon>
        <taxon>Saccharomycetes</taxon>
        <taxon>Saccharomycetales</taxon>
        <taxon>Saccharomycetaceae</taxon>
        <taxon>Saccharomyces</taxon>
    </lineage>
</organism>
<dbReference type="EMBL" id="AAFW02000044">
    <property type="protein sequence ID" value="EDN63237.1"/>
    <property type="molecule type" value="Genomic_DNA"/>
</dbReference>
<dbReference type="PDB" id="6W32">
    <property type="method" value="X-ray"/>
    <property type="resolution" value="2.90 A"/>
    <property type="chains" value="A/B=1-294"/>
</dbReference>
<dbReference type="PDBsum" id="6W32"/>
<dbReference type="SMR" id="A6ZQI5"/>
<dbReference type="HOGENOM" id="CLU_045138_0_1_1"/>
<dbReference type="Proteomes" id="UP000007060">
    <property type="component" value="Unassembled WGS sequence"/>
</dbReference>
<dbReference type="GO" id="GO:0032541">
    <property type="term" value="C:cortical endoplasmic reticulum"/>
    <property type="evidence" value="ECO:0007669"/>
    <property type="project" value="TreeGrafter"/>
</dbReference>
<dbReference type="GO" id="GO:0005829">
    <property type="term" value="C:cytosol"/>
    <property type="evidence" value="ECO:0007669"/>
    <property type="project" value="TreeGrafter"/>
</dbReference>
<dbReference type="GO" id="GO:0005789">
    <property type="term" value="C:endoplasmic reticulum membrane"/>
    <property type="evidence" value="ECO:0007669"/>
    <property type="project" value="UniProtKB-SubCell"/>
</dbReference>
<dbReference type="GO" id="GO:0005886">
    <property type="term" value="C:plasma membrane"/>
    <property type="evidence" value="ECO:0007669"/>
    <property type="project" value="TreeGrafter"/>
</dbReference>
<dbReference type="GO" id="GO:0046872">
    <property type="term" value="F:metal ion binding"/>
    <property type="evidence" value="ECO:0007669"/>
    <property type="project" value="UniProtKB-KW"/>
</dbReference>
<dbReference type="GO" id="GO:0008526">
    <property type="term" value="F:phosphatidylinositol transfer activity"/>
    <property type="evidence" value="ECO:0007669"/>
    <property type="project" value="InterPro"/>
</dbReference>
<dbReference type="GO" id="GO:0043001">
    <property type="term" value="P:Golgi to plasma membrane protein transport"/>
    <property type="evidence" value="ECO:0007669"/>
    <property type="project" value="TreeGrafter"/>
</dbReference>
<dbReference type="GO" id="GO:0017157">
    <property type="term" value="P:regulation of exocytosis"/>
    <property type="evidence" value="ECO:0007669"/>
    <property type="project" value="TreeGrafter"/>
</dbReference>
<dbReference type="CDD" id="cd00170">
    <property type="entry name" value="SEC14"/>
    <property type="match status" value="1"/>
</dbReference>
<dbReference type="FunFam" id="3.40.525.10:FF:000027">
    <property type="entry name" value="Phosphatidylinositol transfer protein"/>
    <property type="match status" value="1"/>
</dbReference>
<dbReference type="Gene3D" id="3.40.525.10">
    <property type="entry name" value="CRAL-TRIO lipid binding domain"/>
    <property type="match status" value="1"/>
</dbReference>
<dbReference type="InterPro" id="IPR001251">
    <property type="entry name" value="CRAL-TRIO_dom"/>
</dbReference>
<dbReference type="InterPro" id="IPR036865">
    <property type="entry name" value="CRAL-TRIO_dom_sf"/>
</dbReference>
<dbReference type="InterPro" id="IPR042938">
    <property type="entry name" value="Sfh5"/>
</dbReference>
<dbReference type="PANTHER" id="PTHR47669">
    <property type="entry name" value="PHOSPHATIDYLINOSITOL TRANSFER PROTEIN SFH5"/>
    <property type="match status" value="1"/>
</dbReference>
<dbReference type="PANTHER" id="PTHR47669:SF1">
    <property type="entry name" value="PHOSPHATIDYLINOSITOL TRANSFER PROTEIN SFH5"/>
    <property type="match status" value="1"/>
</dbReference>
<dbReference type="Pfam" id="PF00650">
    <property type="entry name" value="CRAL_TRIO"/>
    <property type="match status" value="1"/>
</dbReference>
<dbReference type="SMART" id="SM00516">
    <property type="entry name" value="SEC14"/>
    <property type="match status" value="1"/>
</dbReference>
<dbReference type="SUPFAM" id="SSF52087">
    <property type="entry name" value="CRAL/TRIO domain"/>
    <property type="match status" value="1"/>
</dbReference>
<dbReference type="PROSITE" id="PS50191">
    <property type="entry name" value="CRAL_TRIO"/>
    <property type="match status" value="1"/>
</dbReference>
<keyword id="KW-0002">3D-structure</keyword>
<keyword id="KW-0963">Cytoplasm</keyword>
<keyword id="KW-0256">Endoplasmic reticulum</keyword>
<keyword id="KW-0349">Heme</keyword>
<keyword id="KW-0408">Iron</keyword>
<keyword id="KW-0445">Lipid transport</keyword>
<keyword id="KW-0472">Membrane</keyword>
<keyword id="KW-0479">Metal-binding</keyword>
<keyword id="KW-0492">Microsome</keyword>
<keyword id="KW-0813">Transport</keyword>
<comment type="function">
    <text evidence="1 3">Non-classical phosphatidylinositol (PtdIns) transfer protein (PITP), which exhibits PtdIns-binding/transfer activity in the absence of detectable PtdCho-binding/transfer activity. Regulates PtdIns(4,5)P2 homeostasis at the plasma membrane (By similarity). Heme-binding protein that may play a role in organic oxidant-induced stress responses (PubMed:32780017).</text>
</comment>
<comment type="catalytic activity">
    <reaction evidence="1">
        <text>a 1,2-diacyl-sn-glycero-3-phospho-(1D-myo-inositol)(in) = a 1,2-diacyl-sn-glycero-3-phospho-(1D-myo-inositol)(out)</text>
        <dbReference type="Rhea" id="RHEA:38691"/>
        <dbReference type="ChEBI" id="CHEBI:57880"/>
    </reaction>
    <physiologicalReaction direction="left-to-right" evidence="1">
        <dbReference type="Rhea" id="RHEA:38692"/>
    </physiologicalReaction>
</comment>
<comment type="cofactor">
    <cofactor evidence="3">
        <name>heme b</name>
        <dbReference type="ChEBI" id="CHEBI:60344"/>
    </cofactor>
</comment>
<comment type="subcellular location">
    <subcellularLocation>
        <location evidence="1">Cytoplasm</location>
    </subcellularLocation>
    <subcellularLocation>
        <location evidence="1">Endoplasmic reticulum membrane</location>
        <topology evidence="1">Peripheral membrane protein</topology>
    </subcellularLocation>
    <subcellularLocation>
        <location evidence="1">Microsome membrane</location>
        <topology evidence="1">Peripheral membrane protein</topology>
    </subcellularLocation>
</comment>
<comment type="similarity">
    <text evidence="4">Belongs to the SFH5 family.</text>
</comment>
<sequence>MKFDNDSEKQVFDKLKKAIPGIIKEKCAGYDELYGYKLNPEGLTQEEVDKYYDEKIADRLTYKLCKAYQFEYSTIVQNLIDILNWRREFNPLSCAYKEVHNTELQNVGILTFDANGDANKKAVTWNLYGQLVKKKELFQNVDKFVRYRIGLMEKGLSLLDFTSSDNNYMTQVHDYKGVSVWRMDSDIKNCSKTVIGIFQKYYPELLYAKYFVNVPTVFGWVYDLIKKFVDETTRKKFVVLTDGSKLGQYLKDCPYEGYGGKDKKNNLTKQNVTNVHPTEYGLYILQKQIIEDVE</sequence>
<reference key="1">
    <citation type="journal article" date="2007" name="Proc. Natl. Acad. Sci. U.S.A.">
        <title>Genome sequencing and comparative analysis of Saccharomyces cerevisiae strain YJM789.</title>
        <authorList>
            <person name="Wei W."/>
            <person name="McCusker J.H."/>
            <person name="Hyman R.W."/>
            <person name="Jones T."/>
            <person name="Ning Y."/>
            <person name="Cao Z."/>
            <person name="Gu Z."/>
            <person name="Bruno D."/>
            <person name="Miranda M."/>
            <person name="Nguyen M."/>
            <person name="Wilhelmy J."/>
            <person name="Komp C."/>
            <person name="Tamse R."/>
            <person name="Wang X."/>
            <person name="Jia P."/>
            <person name="Luedi P."/>
            <person name="Oefner P.J."/>
            <person name="David L."/>
            <person name="Dietrich F.S."/>
            <person name="Li Y."/>
            <person name="Davis R.W."/>
            <person name="Steinmetz L.M."/>
        </authorList>
    </citation>
    <scope>NUCLEOTIDE SEQUENCE [LARGE SCALE GENOMIC DNA]</scope>
    <source>
        <strain>YJM789</strain>
    </source>
</reference>
<reference key="2">
    <citation type="journal article" date="2020" name="Elife">
        <title>A Sec14-like phosphatidylinositol transfer protein paralog defines a novel class of heme-binding proteins.</title>
        <authorList>
            <person name="Khan D."/>
            <person name="Lee D."/>
            <person name="Gulten G."/>
            <person name="Aggarwal A."/>
            <person name="Wofford J."/>
            <person name="Krieger I."/>
            <person name="Tripathi A."/>
            <person name="Patrick J.W."/>
            <person name="Eckert D.M."/>
            <person name="Laganowsky A."/>
            <person name="Sacchettini J."/>
            <person name="Lindahl P."/>
            <person name="Bankaitis V.A."/>
        </authorList>
    </citation>
    <scope>X-RAY CRYSTALLOGRAPHY (2.90 ANGSTROMS) IN COMPLEX WITH HEME</scope>
    <scope>FUNCTION</scope>
</reference>